<protein>
    <recommendedName>
        <fullName>Calcium-transporting ATPase 1</fullName>
        <ecNumber>7.2.2.10</ecNumber>
    </recommendedName>
    <alternativeName>
        <fullName>LLCA1</fullName>
    </alternativeName>
</protein>
<proteinExistence type="evidence at protein level"/>
<keyword id="KW-0067">ATP-binding</keyword>
<keyword id="KW-0106">Calcium</keyword>
<keyword id="KW-0109">Calcium transport</keyword>
<keyword id="KW-1003">Cell membrane</keyword>
<keyword id="KW-0406">Ion transport</keyword>
<keyword id="KW-0472">Membrane</keyword>
<keyword id="KW-0479">Metal-binding</keyword>
<keyword id="KW-0547">Nucleotide-binding</keyword>
<keyword id="KW-0597">Phosphoprotein</keyword>
<keyword id="KW-1185">Reference proteome</keyword>
<keyword id="KW-1278">Translocase</keyword>
<keyword id="KW-0812">Transmembrane</keyword>
<keyword id="KW-1133">Transmembrane helix</keyword>
<keyword id="KW-0813">Transport</keyword>
<gene>
    <name type="primary">yoaB</name>
    <name type="ordered locus">LL1366</name>
    <name type="ORF">L2866</name>
</gene>
<sequence length="878" mass="96033">MQPYNQSVNEVLEETKSQFEGLSPKEVKNRQAKDGFNELKEKKKTSTWELFIDTLKDPMVIILLLVAFVQLFLGEFVESLVIFIVLMINSVVAVVQTKRAESSLDALRQMSAPSAKVLRNGEKTSIPARELVVGDIVSLEAGDFIPADGRLIDVQNLRVEEGMLTGESEPVEKFSDVIEGEVALGDRKNMVFSSSLVVYGRADFLVTAIAEQTEIGKIAQMLETAEAKQTPLQQKLEKFGKQLGWVILALCALIFAVQILRLFTTNQTADMQKAVLDSFMFAVAVAVAAIPEALSSVVTIVLSVGTNKMAKQHAIMRNLPAVETLGSTSVICTDKTGTLTQNKMTVVDSFLPTQGSKELTDLTQADQKLLLNAMVLCNDSSFSQEGQLLGDPTEVALIAYSDKIGYPYQDLREKSPRLAEFPFDSERKLMSTINDFEGQKTIFVKGGPDVLFNRCNQVFLDGKVQEFTPELKEKFQAQNEAFSQKALRVLAYAYKPVSDNKTELTLTDENDLILIGLSAMIDPPREAVYDSIAEAKKAGIKTIMITGDHKTTAQAIAKDIGLMNEGDMALTGQELDALTEDELRENLEKISVYARVSPENKIRIVRAWQNEHQVTAMTGDGVNDAPALKQANIGIAMGSGTDVAKDASSMILTDDNFVSIVSAVSIGRVVYDNIKKSISYLFSGNLGAIIAIVFALVVGWVNPFTALQLLFINLVNDSVPAIALGMEKAEPDVMEKAPRQLNEGIFANGLMRVILIRGSLIGIAAIISQYVGQKTSPEMGVAMAFTTLILARTLQTFAARSNSQNILKLGFTTNKYVLMAVTFCLALYSLTTLPFLREIFSIPAAFGWSQWIVAAGLAVIAVICMEILKSIKGVFEKH</sequence>
<evidence type="ECO:0000250" key="1"/>
<evidence type="ECO:0000255" key="2"/>
<evidence type="ECO:0000269" key="3">
    <source>
    </source>
</evidence>
<evidence type="ECO:0000305" key="4"/>
<name>LLCA1_LACLA</name>
<organism>
    <name type="scientific">Lactococcus lactis subsp. lactis (strain IL1403)</name>
    <name type="common">Streptococcus lactis</name>
    <dbReference type="NCBI Taxonomy" id="272623"/>
    <lineage>
        <taxon>Bacteria</taxon>
        <taxon>Bacillati</taxon>
        <taxon>Bacillota</taxon>
        <taxon>Bacilli</taxon>
        <taxon>Lactobacillales</taxon>
        <taxon>Streptococcaceae</taxon>
        <taxon>Lactococcus</taxon>
    </lineage>
</organism>
<reference key="1">
    <citation type="journal article" date="2001" name="Genome Res.">
        <title>The complete genome sequence of the lactic acid bacterium Lactococcus lactis ssp. lactis IL1403.</title>
        <authorList>
            <person name="Bolotin A."/>
            <person name="Wincker P."/>
            <person name="Mauger S."/>
            <person name="Jaillon O."/>
            <person name="Malarme K."/>
            <person name="Weissenbach J."/>
            <person name="Ehrlich S.D."/>
            <person name="Sorokin A."/>
        </authorList>
    </citation>
    <scope>NUCLEOTIDE SEQUENCE [LARGE SCALE GENOMIC DNA]</scope>
    <source>
        <strain>IL1403</strain>
    </source>
</reference>
<reference key="2">
    <citation type="journal article" date="2013" name="FEBS J.">
        <title>Probing determinants of cyclopiazonic acid sensitivity of bacterial Ca2+-ATPases.</title>
        <authorList>
            <person name="Kotsubei A."/>
            <person name="Gorgel M."/>
            <person name="Morth J.P."/>
            <person name="Nissen P."/>
            <person name="Andersen J.L."/>
        </authorList>
    </citation>
    <scope>FUNCTION</scope>
    <scope>CATALYTIC ACTIVITY</scope>
    <scope>ACTIVITY REGULATION</scope>
    <scope>MUTAGENESIS OF THR-54; MET-59 AND SER-295</scope>
</reference>
<accession>Q9CFU9</accession>
<comment type="function">
    <text evidence="3">Catalyzes the hydrolysis of ATP coupled with the transport of calcium.</text>
</comment>
<comment type="catalytic activity">
    <reaction evidence="3">
        <text>Ca(2+)(in) + ATP + H2O = Ca(2+)(out) + ADP + phosphate + H(+)</text>
        <dbReference type="Rhea" id="RHEA:18105"/>
        <dbReference type="ChEBI" id="CHEBI:15377"/>
        <dbReference type="ChEBI" id="CHEBI:15378"/>
        <dbReference type="ChEBI" id="CHEBI:29108"/>
        <dbReference type="ChEBI" id="CHEBI:30616"/>
        <dbReference type="ChEBI" id="CHEBI:43474"/>
        <dbReference type="ChEBI" id="CHEBI:456216"/>
        <dbReference type="EC" id="7.2.2.10"/>
    </reaction>
</comment>
<comment type="activity regulation">
    <text evidence="3">Inhibited by very high concentrations of cyclopiazonic acid (CPA).</text>
</comment>
<comment type="subcellular location">
    <subcellularLocation>
        <location evidence="1">Cell membrane</location>
        <topology evidence="1">Multi-pass membrane protein</topology>
    </subcellularLocation>
</comment>
<comment type="similarity">
    <text evidence="4">Belongs to the cation transport ATPase (P-type) (TC 3.A.3) family. Type IIA subfamily.</text>
</comment>
<dbReference type="EC" id="7.2.2.10"/>
<dbReference type="EMBL" id="AE005176">
    <property type="protein sequence ID" value="AAK05464.1"/>
    <property type="molecule type" value="Genomic_DNA"/>
</dbReference>
<dbReference type="PIR" id="F86795">
    <property type="entry name" value="F86795"/>
</dbReference>
<dbReference type="RefSeq" id="NP_267522.1">
    <property type="nucleotide sequence ID" value="NC_002662.1"/>
</dbReference>
<dbReference type="RefSeq" id="WP_010905909.1">
    <property type="nucleotide sequence ID" value="NC_002662.1"/>
</dbReference>
<dbReference type="SMR" id="Q9CFU9"/>
<dbReference type="PaxDb" id="272623-L2866"/>
<dbReference type="EnsemblBacteria" id="AAK05464">
    <property type="protein sequence ID" value="AAK05464"/>
    <property type="gene ID" value="L2866"/>
</dbReference>
<dbReference type="KEGG" id="lla:L2866"/>
<dbReference type="PATRIC" id="fig|272623.7.peg.1472"/>
<dbReference type="eggNOG" id="COG0474">
    <property type="taxonomic scope" value="Bacteria"/>
</dbReference>
<dbReference type="HOGENOM" id="CLU_002360_3_3_9"/>
<dbReference type="OrthoDB" id="9760364at2"/>
<dbReference type="Proteomes" id="UP000002196">
    <property type="component" value="Chromosome"/>
</dbReference>
<dbReference type="GO" id="GO:0005886">
    <property type="term" value="C:plasma membrane"/>
    <property type="evidence" value="ECO:0007669"/>
    <property type="project" value="UniProtKB-SubCell"/>
</dbReference>
<dbReference type="GO" id="GO:0005524">
    <property type="term" value="F:ATP binding"/>
    <property type="evidence" value="ECO:0007669"/>
    <property type="project" value="UniProtKB-KW"/>
</dbReference>
<dbReference type="GO" id="GO:0016887">
    <property type="term" value="F:ATP hydrolysis activity"/>
    <property type="evidence" value="ECO:0007669"/>
    <property type="project" value="InterPro"/>
</dbReference>
<dbReference type="GO" id="GO:0046872">
    <property type="term" value="F:metal ion binding"/>
    <property type="evidence" value="ECO:0007669"/>
    <property type="project" value="UniProtKB-KW"/>
</dbReference>
<dbReference type="GO" id="GO:0005388">
    <property type="term" value="F:P-type calcium transporter activity"/>
    <property type="evidence" value="ECO:0007669"/>
    <property type="project" value="UniProtKB-EC"/>
</dbReference>
<dbReference type="CDD" id="cd02089">
    <property type="entry name" value="P-type_ATPase_Ca_prok"/>
    <property type="match status" value="1"/>
</dbReference>
<dbReference type="FunFam" id="2.70.150.10:FF:000016">
    <property type="entry name" value="Calcium-transporting P-type ATPase putative"/>
    <property type="match status" value="1"/>
</dbReference>
<dbReference type="FunFam" id="3.40.50.1000:FF:000028">
    <property type="entry name" value="Calcium-transporting P-type ATPase, putative"/>
    <property type="match status" value="1"/>
</dbReference>
<dbReference type="Gene3D" id="3.40.1110.10">
    <property type="entry name" value="Calcium-transporting ATPase, cytoplasmic domain N"/>
    <property type="match status" value="1"/>
</dbReference>
<dbReference type="Gene3D" id="2.70.150.10">
    <property type="entry name" value="Calcium-transporting ATPase, cytoplasmic transduction domain A"/>
    <property type="match status" value="1"/>
</dbReference>
<dbReference type="Gene3D" id="1.20.1110.10">
    <property type="entry name" value="Calcium-transporting ATPase, transmembrane domain"/>
    <property type="match status" value="1"/>
</dbReference>
<dbReference type="Gene3D" id="3.40.50.1000">
    <property type="entry name" value="HAD superfamily/HAD-like"/>
    <property type="match status" value="1"/>
</dbReference>
<dbReference type="InterPro" id="IPR006068">
    <property type="entry name" value="ATPase_P-typ_cation-transptr_C"/>
</dbReference>
<dbReference type="InterPro" id="IPR004014">
    <property type="entry name" value="ATPase_P-typ_cation-transptr_N"/>
</dbReference>
<dbReference type="InterPro" id="IPR023299">
    <property type="entry name" value="ATPase_P-typ_cyto_dom_N"/>
</dbReference>
<dbReference type="InterPro" id="IPR018303">
    <property type="entry name" value="ATPase_P-typ_P_site"/>
</dbReference>
<dbReference type="InterPro" id="IPR023298">
    <property type="entry name" value="ATPase_P-typ_TM_dom_sf"/>
</dbReference>
<dbReference type="InterPro" id="IPR008250">
    <property type="entry name" value="ATPase_P-typ_transduc_dom_A_sf"/>
</dbReference>
<dbReference type="InterPro" id="IPR036412">
    <property type="entry name" value="HAD-like_sf"/>
</dbReference>
<dbReference type="InterPro" id="IPR023214">
    <property type="entry name" value="HAD_sf"/>
</dbReference>
<dbReference type="InterPro" id="IPR001757">
    <property type="entry name" value="P_typ_ATPase"/>
</dbReference>
<dbReference type="InterPro" id="IPR044492">
    <property type="entry name" value="P_typ_ATPase_HD_dom"/>
</dbReference>
<dbReference type="NCBIfam" id="TIGR01494">
    <property type="entry name" value="ATPase_P-type"/>
    <property type="match status" value="3"/>
</dbReference>
<dbReference type="PANTHER" id="PTHR42861">
    <property type="entry name" value="CALCIUM-TRANSPORTING ATPASE"/>
    <property type="match status" value="1"/>
</dbReference>
<dbReference type="Pfam" id="PF13246">
    <property type="entry name" value="Cation_ATPase"/>
    <property type="match status" value="1"/>
</dbReference>
<dbReference type="Pfam" id="PF00689">
    <property type="entry name" value="Cation_ATPase_C"/>
    <property type="match status" value="1"/>
</dbReference>
<dbReference type="Pfam" id="PF00690">
    <property type="entry name" value="Cation_ATPase_N"/>
    <property type="match status" value="1"/>
</dbReference>
<dbReference type="Pfam" id="PF00122">
    <property type="entry name" value="E1-E2_ATPase"/>
    <property type="match status" value="1"/>
</dbReference>
<dbReference type="Pfam" id="PF08282">
    <property type="entry name" value="Hydrolase_3"/>
    <property type="match status" value="1"/>
</dbReference>
<dbReference type="PRINTS" id="PR00119">
    <property type="entry name" value="CATATPASE"/>
</dbReference>
<dbReference type="PRINTS" id="PR00120">
    <property type="entry name" value="HATPASE"/>
</dbReference>
<dbReference type="SFLD" id="SFLDG00002">
    <property type="entry name" value="C1.7:_P-type_atpase_like"/>
    <property type="match status" value="1"/>
</dbReference>
<dbReference type="SFLD" id="SFLDF00027">
    <property type="entry name" value="p-type_atpase"/>
    <property type="match status" value="1"/>
</dbReference>
<dbReference type="SMART" id="SM00831">
    <property type="entry name" value="Cation_ATPase_N"/>
    <property type="match status" value="1"/>
</dbReference>
<dbReference type="SUPFAM" id="SSF81653">
    <property type="entry name" value="Calcium ATPase, transduction domain A"/>
    <property type="match status" value="1"/>
</dbReference>
<dbReference type="SUPFAM" id="SSF81665">
    <property type="entry name" value="Calcium ATPase, transmembrane domain M"/>
    <property type="match status" value="1"/>
</dbReference>
<dbReference type="SUPFAM" id="SSF56784">
    <property type="entry name" value="HAD-like"/>
    <property type="match status" value="1"/>
</dbReference>
<dbReference type="SUPFAM" id="SSF81660">
    <property type="entry name" value="Metal cation-transporting ATPase, ATP-binding domain N"/>
    <property type="match status" value="1"/>
</dbReference>
<dbReference type="PROSITE" id="PS00154">
    <property type="entry name" value="ATPASE_E1_E2"/>
    <property type="match status" value="1"/>
</dbReference>
<feature type="chain" id="PRO_0000424526" description="Calcium-transporting ATPase 1">
    <location>
        <begin position="1"/>
        <end position="878"/>
    </location>
</feature>
<feature type="transmembrane region" description="Helical" evidence="2">
    <location>
        <begin position="50"/>
        <end position="72"/>
    </location>
</feature>
<feature type="transmembrane region" description="Helical" evidence="2">
    <location>
        <begin position="76"/>
        <end position="95"/>
    </location>
</feature>
<feature type="transmembrane region" description="Helical" evidence="2">
    <location>
        <begin position="243"/>
        <end position="263"/>
    </location>
</feature>
<feature type="transmembrane region" description="Helical" evidence="2">
    <location>
        <begin position="281"/>
        <end position="301"/>
    </location>
</feature>
<feature type="transmembrane region" description="Helical" evidence="2">
    <location>
        <begin position="681"/>
        <end position="701"/>
    </location>
</feature>
<feature type="transmembrane region" description="Helical" evidence="2">
    <location>
        <begin position="704"/>
        <end position="724"/>
    </location>
</feature>
<feature type="transmembrane region" description="Helical" evidence="2">
    <location>
        <begin position="753"/>
        <end position="773"/>
    </location>
</feature>
<feature type="transmembrane region" description="Helical" evidence="2">
    <location>
        <begin position="779"/>
        <end position="799"/>
    </location>
</feature>
<feature type="transmembrane region" description="Helical" evidence="2">
    <location>
        <begin position="816"/>
        <end position="836"/>
    </location>
</feature>
<feature type="transmembrane region" description="Helical" evidence="2">
    <location>
        <begin position="845"/>
        <end position="865"/>
    </location>
</feature>
<feature type="active site" description="4-aspartylphosphate intermediate" evidence="1">
    <location>
        <position position="334"/>
    </location>
</feature>
<feature type="binding site" evidence="1">
    <location>
        <position position="287"/>
    </location>
    <ligand>
        <name>Ca(2+)</name>
        <dbReference type="ChEBI" id="CHEBI:29108"/>
    </ligand>
</feature>
<feature type="binding site" evidence="1">
    <location>
        <position position="288"/>
    </location>
    <ligand>
        <name>Ca(2+)</name>
        <dbReference type="ChEBI" id="CHEBI:29108"/>
    </ligand>
</feature>
<feature type="binding site" evidence="1">
    <location>
        <position position="290"/>
    </location>
    <ligand>
        <name>Ca(2+)</name>
        <dbReference type="ChEBI" id="CHEBI:29108"/>
    </ligand>
</feature>
<feature type="binding site" evidence="1">
    <location>
        <position position="292"/>
    </location>
    <ligand>
        <name>Ca(2+)</name>
        <dbReference type="ChEBI" id="CHEBI:29108"/>
    </ligand>
</feature>
<feature type="binding site" evidence="1">
    <location>
        <position position="713"/>
    </location>
    <ligand>
        <name>Ca(2+)</name>
        <dbReference type="ChEBI" id="CHEBI:29108"/>
    </ligand>
</feature>
<feature type="binding site" evidence="1">
    <location>
        <position position="717"/>
    </location>
    <ligand>
        <name>Ca(2+)</name>
        <dbReference type="ChEBI" id="CHEBI:29108"/>
    </ligand>
</feature>
<feature type="mutagenesis site" description="Increases sensitivity to CPA. CPA-sensitive; when associated with L-59 and P-295." evidence="3">
    <original>T</original>
    <variation>Q</variation>
    <location>
        <position position="54"/>
    </location>
</feature>
<feature type="mutagenesis site" description="CPA-sensitive; when associated with Q-54 and P-295." evidence="3">
    <original>M</original>
    <variation>L</variation>
    <location>
        <position position="59"/>
    </location>
</feature>
<feature type="mutagenesis site" description="Increases sensitivity to CPA. CPA-sensitive; when associated with Q-54 and L-59." evidence="3">
    <original>S</original>
    <variation>P</variation>
    <location>
        <position position="295"/>
    </location>
</feature>